<accession>Q978N1</accession>
<organism>
    <name type="scientific">Thermoplasma volcanium (strain ATCC 51530 / DSM 4299 / JCM 9571 / NBRC 15438 / GSS1)</name>
    <dbReference type="NCBI Taxonomy" id="273116"/>
    <lineage>
        <taxon>Archaea</taxon>
        <taxon>Methanobacteriati</taxon>
        <taxon>Thermoplasmatota</taxon>
        <taxon>Thermoplasmata</taxon>
        <taxon>Thermoplasmatales</taxon>
        <taxon>Thermoplasmataceae</taxon>
        <taxon>Thermoplasma</taxon>
    </lineage>
</organism>
<feature type="chain" id="PRO_0000142391" description="Protein TV1384">
    <location>
        <begin position="1"/>
        <end position="201"/>
    </location>
</feature>
<feature type="domain" description="AMMECR1" evidence="1">
    <location>
        <begin position="11"/>
        <end position="200"/>
    </location>
</feature>
<proteinExistence type="inferred from homology"/>
<name>Y1384_THEVO</name>
<reference key="1">
    <citation type="journal article" date="2000" name="Proc. Natl. Acad. Sci. U.S.A.">
        <title>Archaeal adaptation to higher temperatures revealed by genomic sequence of Thermoplasma volcanium.</title>
        <authorList>
            <person name="Kawashima T."/>
            <person name="Amano N."/>
            <person name="Koike H."/>
            <person name="Makino S."/>
            <person name="Higuchi S."/>
            <person name="Kawashima-Ohya Y."/>
            <person name="Watanabe K."/>
            <person name="Yamazaki M."/>
            <person name="Kanehori K."/>
            <person name="Kawamoto T."/>
            <person name="Nunoshiba T."/>
            <person name="Yamamoto Y."/>
            <person name="Aramaki H."/>
            <person name="Makino K."/>
            <person name="Suzuki M."/>
        </authorList>
    </citation>
    <scope>NUCLEOTIDE SEQUENCE [LARGE SCALE GENOMIC DNA]</scope>
    <source>
        <strain>ATCC 51530 / DSM 4299 / JCM 9571 / NBRC 15438 / GSS1</strain>
    </source>
</reference>
<dbReference type="EMBL" id="BA000011">
    <property type="protein sequence ID" value="BAB60526.1"/>
    <property type="molecule type" value="Genomic_DNA"/>
</dbReference>
<dbReference type="RefSeq" id="WP_010917617.1">
    <property type="nucleotide sequence ID" value="NC_002689.2"/>
</dbReference>
<dbReference type="SMR" id="Q978N1"/>
<dbReference type="STRING" id="273116.gene:9382192"/>
<dbReference type="PaxDb" id="273116-14325623"/>
<dbReference type="GeneID" id="1442075"/>
<dbReference type="KEGG" id="tvo:TVG1431058"/>
<dbReference type="eggNOG" id="arCOG01336">
    <property type="taxonomic scope" value="Archaea"/>
</dbReference>
<dbReference type="HOGENOM" id="CLU_095686_1_1_2"/>
<dbReference type="OrthoDB" id="55941at2157"/>
<dbReference type="PhylomeDB" id="Q978N1"/>
<dbReference type="Proteomes" id="UP000001017">
    <property type="component" value="Chromosome"/>
</dbReference>
<dbReference type="Gene3D" id="3.30.700.20">
    <property type="entry name" value="Hypothetical protein ph0010, domain 1"/>
    <property type="match status" value="1"/>
</dbReference>
<dbReference type="Gene3D" id="3.30.1490.150">
    <property type="entry name" value="Hypothetical protein ph0010, domain 2"/>
    <property type="match status" value="1"/>
</dbReference>
<dbReference type="HAMAP" id="MF_00645">
    <property type="entry name" value="AMMECR1"/>
    <property type="match status" value="1"/>
</dbReference>
<dbReference type="InterPro" id="IPR023473">
    <property type="entry name" value="AMMECR1"/>
</dbReference>
<dbReference type="InterPro" id="IPR036071">
    <property type="entry name" value="AMMECR1_dom_sf"/>
</dbReference>
<dbReference type="InterPro" id="IPR002733">
    <property type="entry name" value="AMMECR1_domain"/>
</dbReference>
<dbReference type="InterPro" id="IPR027485">
    <property type="entry name" value="AMMECR1_N"/>
</dbReference>
<dbReference type="InterPro" id="IPR027623">
    <property type="entry name" value="AmmeMemoSam_A"/>
</dbReference>
<dbReference type="InterPro" id="IPR023472">
    <property type="entry name" value="Uncharacterised_MJ0810"/>
</dbReference>
<dbReference type="NCBIfam" id="TIGR04335">
    <property type="entry name" value="AmmeMemoSam_A"/>
    <property type="match status" value="1"/>
</dbReference>
<dbReference type="NCBIfam" id="TIGR00296">
    <property type="entry name" value="TIGR00296 family protein"/>
    <property type="match status" value="1"/>
</dbReference>
<dbReference type="PANTHER" id="PTHR13016:SF0">
    <property type="entry name" value="AMME SYNDROME CANDIDATE GENE 1 PROTEIN"/>
    <property type="match status" value="1"/>
</dbReference>
<dbReference type="PANTHER" id="PTHR13016">
    <property type="entry name" value="AMMECR1 HOMOLOG"/>
    <property type="match status" value="1"/>
</dbReference>
<dbReference type="Pfam" id="PF01871">
    <property type="entry name" value="AMMECR1"/>
    <property type="match status" value="1"/>
</dbReference>
<dbReference type="SUPFAM" id="SSF143447">
    <property type="entry name" value="AMMECR1-like"/>
    <property type="match status" value="1"/>
</dbReference>
<dbReference type="PROSITE" id="PS51112">
    <property type="entry name" value="AMMECR1"/>
    <property type="match status" value="1"/>
</dbReference>
<protein>
    <recommendedName>
        <fullName evidence="1">Protein TV1384</fullName>
    </recommendedName>
</protein>
<gene>
    <name type="ordered locus">TV1384</name>
    <name type="ORF">TVG1431058</name>
</gene>
<sequence>MDSEQINVNLDIGAKAVMLARRAAAAKLNNEKLPEVPDDPIFHEKHGVFTTINTYPDNQLRGCIGFPEPYYELGEGIIKSSIYAATDDPRFDPMEPDELNRVTFELSILTVPQEVTVNPEERPKAITVGKDGIIAVYNGASGLLLPQVATEYRMSAEEFLEALCEKAGLWQGCWKYKKVKISKFQAIVFGEIEPNGKVEQR</sequence>
<evidence type="ECO:0000255" key="1">
    <source>
        <dbReference type="HAMAP-Rule" id="MF_00645"/>
    </source>
</evidence>